<gene>
    <name evidence="1" type="primary">fbp</name>
    <name type="ordered locus">Mrad2831_3559</name>
</gene>
<organism>
    <name type="scientific">Methylobacterium radiotolerans (strain ATCC 27329 / DSM 1819 / JCM 2831 / NBRC 15690 / NCIMB 10815 / 0-1)</name>
    <dbReference type="NCBI Taxonomy" id="426355"/>
    <lineage>
        <taxon>Bacteria</taxon>
        <taxon>Pseudomonadati</taxon>
        <taxon>Pseudomonadota</taxon>
        <taxon>Alphaproteobacteria</taxon>
        <taxon>Hyphomicrobiales</taxon>
        <taxon>Methylobacteriaceae</taxon>
        <taxon>Methylobacterium</taxon>
    </lineage>
</organism>
<dbReference type="EC" id="3.1.3.11" evidence="1"/>
<dbReference type="EMBL" id="CP001001">
    <property type="protein sequence ID" value="ACB25535.1"/>
    <property type="molecule type" value="Genomic_DNA"/>
</dbReference>
<dbReference type="RefSeq" id="WP_012320496.1">
    <property type="nucleotide sequence ID" value="NC_010505.1"/>
</dbReference>
<dbReference type="SMR" id="B1LUU9"/>
<dbReference type="STRING" id="426355.Mrad2831_3559"/>
<dbReference type="GeneID" id="6139612"/>
<dbReference type="KEGG" id="mrd:Mrad2831_3559"/>
<dbReference type="PATRIC" id="fig|426355.14.peg.3639"/>
<dbReference type="eggNOG" id="COG0158">
    <property type="taxonomic scope" value="Bacteria"/>
</dbReference>
<dbReference type="HOGENOM" id="CLU_039977_0_0_5"/>
<dbReference type="OrthoDB" id="9806756at2"/>
<dbReference type="UniPathway" id="UPA00138"/>
<dbReference type="Proteomes" id="UP000006589">
    <property type="component" value="Chromosome"/>
</dbReference>
<dbReference type="GO" id="GO:0005829">
    <property type="term" value="C:cytosol"/>
    <property type="evidence" value="ECO:0007669"/>
    <property type="project" value="TreeGrafter"/>
</dbReference>
<dbReference type="GO" id="GO:0042132">
    <property type="term" value="F:fructose 1,6-bisphosphate 1-phosphatase activity"/>
    <property type="evidence" value="ECO:0007669"/>
    <property type="project" value="UniProtKB-UniRule"/>
</dbReference>
<dbReference type="GO" id="GO:0000287">
    <property type="term" value="F:magnesium ion binding"/>
    <property type="evidence" value="ECO:0007669"/>
    <property type="project" value="UniProtKB-UniRule"/>
</dbReference>
<dbReference type="GO" id="GO:0030388">
    <property type="term" value="P:fructose 1,6-bisphosphate metabolic process"/>
    <property type="evidence" value="ECO:0007669"/>
    <property type="project" value="TreeGrafter"/>
</dbReference>
<dbReference type="GO" id="GO:0006002">
    <property type="term" value="P:fructose 6-phosphate metabolic process"/>
    <property type="evidence" value="ECO:0007669"/>
    <property type="project" value="TreeGrafter"/>
</dbReference>
<dbReference type="GO" id="GO:0006000">
    <property type="term" value="P:fructose metabolic process"/>
    <property type="evidence" value="ECO:0007669"/>
    <property type="project" value="TreeGrafter"/>
</dbReference>
<dbReference type="GO" id="GO:0006094">
    <property type="term" value="P:gluconeogenesis"/>
    <property type="evidence" value="ECO:0007669"/>
    <property type="project" value="UniProtKB-UniRule"/>
</dbReference>
<dbReference type="GO" id="GO:0005986">
    <property type="term" value="P:sucrose biosynthetic process"/>
    <property type="evidence" value="ECO:0007669"/>
    <property type="project" value="TreeGrafter"/>
</dbReference>
<dbReference type="CDD" id="cd00354">
    <property type="entry name" value="FBPase"/>
    <property type="match status" value="1"/>
</dbReference>
<dbReference type="FunFam" id="3.40.190.80:FF:000011">
    <property type="entry name" value="Fructose-1,6-bisphosphatase class 1"/>
    <property type="match status" value="1"/>
</dbReference>
<dbReference type="Gene3D" id="3.40.190.80">
    <property type="match status" value="1"/>
</dbReference>
<dbReference type="Gene3D" id="3.30.540.10">
    <property type="entry name" value="Fructose-1,6-Bisphosphatase, subunit A, domain 1"/>
    <property type="match status" value="1"/>
</dbReference>
<dbReference type="HAMAP" id="MF_01855">
    <property type="entry name" value="FBPase_class1"/>
    <property type="match status" value="1"/>
</dbReference>
<dbReference type="InterPro" id="IPR044015">
    <property type="entry name" value="FBPase_C_dom"/>
</dbReference>
<dbReference type="InterPro" id="IPR000146">
    <property type="entry name" value="FBPase_class-1"/>
</dbReference>
<dbReference type="InterPro" id="IPR033391">
    <property type="entry name" value="FBPase_N"/>
</dbReference>
<dbReference type="InterPro" id="IPR028343">
    <property type="entry name" value="FBPtase"/>
</dbReference>
<dbReference type="InterPro" id="IPR020548">
    <property type="entry name" value="Fructose_bisphosphatase_AS"/>
</dbReference>
<dbReference type="NCBIfam" id="NF006779">
    <property type="entry name" value="PRK09293.1-3"/>
    <property type="match status" value="1"/>
</dbReference>
<dbReference type="NCBIfam" id="NF006780">
    <property type="entry name" value="PRK09293.1-4"/>
    <property type="match status" value="1"/>
</dbReference>
<dbReference type="PANTHER" id="PTHR11556">
    <property type="entry name" value="FRUCTOSE-1,6-BISPHOSPHATASE-RELATED"/>
    <property type="match status" value="1"/>
</dbReference>
<dbReference type="PANTHER" id="PTHR11556:SF35">
    <property type="entry name" value="SEDOHEPTULOSE-1,7-BISPHOSPHATASE, CHLOROPLASTIC"/>
    <property type="match status" value="1"/>
</dbReference>
<dbReference type="Pfam" id="PF00316">
    <property type="entry name" value="FBPase"/>
    <property type="match status" value="1"/>
</dbReference>
<dbReference type="Pfam" id="PF18913">
    <property type="entry name" value="FBPase_C"/>
    <property type="match status" value="1"/>
</dbReference>
<dbReference type="PIRSF" id="PIRSF500210">
    <property type="entry name" value="FBPtase"/>
    <property type="match status" value="1"/>
</dbReference>
<dbReference type="PIRSF" id="PIRSF000904">
    <property type="entry name" value="FBPtase_SBPase"/>
    <property type="match status" value="1"/>
</dbReference>
<dbReference type="PRINTS" id="PR00115">
    <property type="entry name" value="F16BPHPHTASE"/>
</dbReference>
<dbReference type="SUPFAM" id="SSF56655">
    <property type="entry name" value="Carbohydrate phosphatase"/>
    <property type="match status" value="1"/>
</dbReference>
<dbReference type="PROSITE" id="PS00124">
    <property type="entry name" value="FBPASE"/>
    <property type="match status" value="1"/>
</dbReference>
<accession>B1LUU9</accession>
<sequence length="351" mass="36614">MAISAAIGTPLETCLAQAVDANPALKDAAAVVAAVGRSAVEISERIGRGALGGDLAAAGDHNSDGDVQKALDVIAHESVTAALRGAPVAEVASEEAEEVMRLNPDAPLAVAIDPLDGSSNIGVNMAVGMIFGIRPSIKDPANPLASFTTPGSTQIAAGFVTYGPATALILTLGEGTQSYVLDRTEGRFKLTSPAMSVPPSTKEFAINASNARHWDAPVKAYIEDCQRGTEGPRDKDYNMRWLASLVADIQRVLTRGGVFLYPGDARKNYARGRLRLLYEVAPVAMLVEQAGGAATDGQTRILDIVANGIHERAPLVCGSTEEVTCVATYYAGGKPDAGRSPLFGQRGLMRS</sequence>
<protein>
    <recommendedName>
        <fullName evidence="1">Fructose-1,6-bisphosphatase class 1</fullName>
        <shortName evidence="1">FBPase class 1</shortName>
        <ecNumber evidence="1">3.1.3.11</ecNumber>
    </recommendedName>
    <alternativeName>
        <fullName evidence="1">D-fructose-1,6-bisphosphate 1-phosphohydrolase class 1</fullName>
    </alternativeName>
</protein>
<proteinExistence type="inferred from homology"/>
<reference key="1">
    <citation type="submission" date="2008-03" db="EMBL/GenBank/DDBJ databases">
        <title>Complete sequence of chromosome of Methylobacterium radiotolerans JCM 2831.</title>
        <authorList>
            <consortium name="US DOE Joint Genome Institute"/>
            <person name="Copeland A."/>
            <person name="Lucas S."/>
            <person name="Lapidus A."/>
            <person name="Glavina del Rio T."/>
            <person name="Dalin E."/>
            <person name="Tice H."/>
            <person name="Bruce D."/>
            <person name="Goodwin L."/>
            <person name="Pitluck S."/>
            <person name="Kiss H."/>
            <person name="Brettin T."/>
            <person name="Detter J.C."/>
            <person name="Han C."/>
            <person name="Kuske C.R."/>
            <person name="Schmutz J."/>
            <person name="Larimer F."/>
            <person name="Land M."/>
            <person name="Hauser L."/>
            <person name="Kyrpides N."/>
            <person name="Mikhailova N."/>
            <person name="Marx C.J."/>
            <person name="Richardson P."/>
        </authorList>
    </citation>
    <scope>NUCLEOTIDE SEQUENCE [LARGE SCALE GENOMIC DNA]</scope>
    <source>
        <strain>ATCC 27329 / DSM 1819 / JCM 2831 / NBRC 15690 / NCIMB 10815 / 0-1</strain>
    </source>
</reference>
<name>F16PA_METRJ</name>
<feature type="chain" id="PRO_0000364602" description="Fructose-1,6-bisphosphatase class 1">
    <location>
        <begin position="1"/>
        <end position="351"/>
    </location>
</feature>
<feature type="binding site" evidence="1">
    <location>
        <position position="94"/>
    </location>
    <ligand>
        <name>Mg(2+)</name>
        <dbReference type="ChEBI" id="CHEBI:18420"/>
        <label>1</label>
    </ligand>
</feature>
<feature type="binding site" evidence="1">
    <location>
        <position position="113"/>
    </location>
    <ligand>
        <name>Mg(2+)</name>
        <dbReference type="ChEBI" id="CHEBI:18420"/>
        <label>1</label>
    </ligand>
</feature>
<feature type="binding site" evidence="1">
    <location>
        <position position="113"/>
    </location>
    <ligand>
        <name>Mg(2+)</name>
        <dbReference type="ChEBI" id="CHEBI:18420"/>
        <label>2</label>
    </ligand>
</feature>
<feature type="binding site" evidence="1">
    <location>
        <position position="115"/>
    </location>
    <ligand>
        <name>Mg(2+)</name>
        <dbReference type="ChEBI" id="CHEBI:18420"/>
        <label>1</label>
    </ligand>
</feature>
<feature type="binding site" evidence="1">
    <location>
        <begin position="116"/>
        <end position="119"/>
    </location>
    <ligand>
        <name>substrate</name>
    </ligand>
</feature>
<feature type="binding site" evidence="1">
    <location>
        <position position="116"/>
    </location>
    <ligand>
        <name>Mg(2+)</name>
        <dbReference type="ChEBI" id="CHEBI:18420"/>
        <label>2</label>
    </ligand>
</feature>
<feature type="binding site" evidence="1">
    <location>
        <position position="207"/>
    </location>
    <ligand>
        <name>substrate</name>
    </ligand>
</feature>
<feature type="binding site" evidence="1">
    <location>
        <position position="279"/>
    </location>
    <ligand>
        <name>Mg(2+)</name>
        <dbReference type="ChEBI" id="CHEBI:18420"/>
        <label>2</label>
    </ligand>
</feature>
<evidence type="ECO:0000255" key="1">
    <source>
        <dbReference type="HAMAP-Rule" id="MF_01855"/>
    </source>
</evidence>
<keyword id="KW-0119">Carbohydrate metabolism</keyword>
<keyword id="KW-0963">Cytoplasm</keyword>
<keyword id="KW-0378">Hydrolase</keyword>
<keyword id="KW-0460">Magnesium</keyword>
<keyword id="KW-0479">Metal-binding</keyword>
<comment type="catalytic activity">
    <reaction evidence="1">
        <text>beta-D-fructose 1,6-bisphosphate + H2O = beta-D-fructose 6-phosphate + phosphate</text>
        <dbReference type="Rhea" id="RHEA:11064"/>
        <dbReference type="ChEBI" id="CHEBI:15377"/>
        <dbReference type="ChEBI" id="CHEBI:32966"/>
        <dbReference type="ChEBI" id="CHEBI:43474"/>
        <dbReference type="ChEBI" id="CHEBI:57634"/>
        <dbReference type="EC" id="3.1.3.11"/>
    </reaction>
</comment>
<comment type="cofactor">
    <cofactor evidence="1">
        <name>Mg(2+)</name>
        <dbReference type="ChEBI" id="CHEBI:18420"/>
    </cofactor>
    <text evidence="1">Binds 2 magnesium ions per subunit.</text>
</comment>
<comment type="pathway">
    <text evidence="1">Carbohydrate biosynthesis; gluconeogenesis.</text>
</comment>
<comment type="subunit">
    <text evidence="1">Homotetramer.</text>
</comment>
<comment type="subcellular location">
    <subcellularLocation>
        <location evidence="1">Cytoplasm</location>
    </subcellularLocation>
</comment>
<comment type="similarity">
    <text evidence="1">Belongs to the FBPase class 1 family.</text>
</comment>